<accession>Q9K187</accession>
<name>LPTD_NEIMB</name>
<keyword id="KW-0998">Cell outer membrane</keyword>
<keyword id="KW-0472">Membrane</keyword>
<keyword id="KW-1185">Reference proteome</keyword>
<keyword id="KW-0732">Signal</keyword>
<reference key="1">
    <citation type="journal article" date="2000" name="Science">
        <title>Complete genome sequence of Neisseria meningitidis serogroup B strain MC58.</title>
        <authorList>
            <person name="Tettelin H."/>
            <person name="Saunders N.J."/>
            <person name="Heidelberg J.F."/>
            <person name="Jeffries A.C."/>
            <person name="Nelson K.E."/>
            <person name="Eisen J.A."/>
            <person name="Ketchum K.A."/>
            <person name="Hood D.W."/>
            <person name="Peden J.F."/>
            <person name="Dodson R.J."/>
            <person name="Nelson W.C."/>
            <person name="Gwinn M.L."/>
            <person name="DeBoy R.T."/>
            <person name="Peterson J.D."/>
            <person name="Hickey E.K."/>
            <person name="Haft D.H."/>
            <person name="Salzberg S.L."/>
            <person name="White O."/>
            <person name="Fleischmann R.D."/>
            <person name="Dougherty B.A."/>
            <person name="Mason T.M."/>
            <person name="Ciecko A."/>
            <person name="Parksey D.S."/>
            <person name="Blair E."/>
            <person name="Cittone H."/>
            <person name="Clark E.B."/>
            <person name="Cotton M.D."/>
            <person name="Utterback T.R."/>
            <person name="Khouri H.M."/>
            <person name="Qin H."/>
            <person name="Vamathevan J.J."/>
            <person name="Gill J."/>
            <person name="Scarlato V."/>
            <person name="Masignani V."/>
            <person name="Pizza M."/>
            <person name="Grandi G."/>
            <person name="Sun L."/>
            <person name="Smith H.O."/>
            <person name="Fraser C.M."/>
            <person name="Moxon E.R."/>
            <person name="Rappuoli R."/>
            <person name="Venter J.C."/>
        </authorList>
    </citation>
    <scope>NUCLEOTIDE SEQUENCE [LARGE SCALE GENOMIC DNA]</scope>
    <source>
        <strain>ATCC BAA-335 / MC58</strain>
    </source>
</reference>
<reference key="2">
    <citation type="journal article" date="2005" name="Hum. Vaccin.">
        <title>Characterization of the protein content of a meningococcal outer membrane vesicle vaccine by polyacrylamide gel electrophoresis and mass spectrometry.</title>
        <authorList>
            <person name="Vipond C."/>
            <person name="Wheeler J.X."/>
            <person name="Jones C."/>
            <person name="Feavers I.M."/>
            <person name="Suker J."/>
        </authorList>
    </citation>
    <scope>IDENTIFICATION BY MASS SPECTROMETRY [LARGE SCALE ANALYSIS]</scope>
</reference>
<comment type="function">
    <text evidence="1">Together with LptE, is involved in the assembly of lipopolysaccharide (LPS) at the surface of the outer membrane.</text>
</comment>
<comment type="subunit">
    <text evidence="1">Component of the lipopolysaccharide transport and assembly complex. Interacts with LptE and LptA.</text>
</comment>
<comment type="subcellular location">
    <subcellularLocation>
        <location evidence="1">Cell outer membrane</location>
    </subcellularLocation>
</comment>
<comment type="miscellaneous">
    <text>Present in outer membrane vesicle formulations which are used as vaccines in human.</text>
</comment>
<comment type="similarity">
    <text evidence="1">Belongs to the LptD family.</text>
</comment>
<comment type="sequence caution" evidence="2">
    <conflict type="erroneous initiation">
        <sequence resource="EMBL-CDS" id="AAF40734"/>
    </conflict>
</comment>
<evidence type="ECO:0000255" key="1">
    <source>
        <dbReference type="HAMAP-Rule" id="MF_01411"/>
    </source>
</evidence>
<evidence type="ECO:0000305" key="2"/>
<sequence>MARLFSLKPLVLALGLCFGTHCAAADAVAAEETDNPTAGESVRSVSEPIQPTSLSLGSTCLFCSNESGSPERTEAAVQGSGEASIPEDYTRIVADRMEGQSQVQVRAEGNVVVERNRTTLNTDWADYDQSGDTVTAGDRFALQQDGTLIRGETLTYNLEQQTGEAHNVRMEIEQGGRRLQSVSRTAEMLGEGHYKLTETQFNTCSAGDAGWYVKAASVEADREKGIGVAKHAAFVFGGVPIFYTPWADFPLDGNRKSGLLVPSLSAGSDGVSLSVPYYFNLAPNLDATFAPSVIGERGAVFDGQVRYLRPDYAGQSDLTWLPHDKKSGRNNRYQAKWQHRHDISDTLQAGVDFNQVSDSGYYRDFYGNKEIAGNVNLNRRVWLDYGGRAAGGSLNAGLSVLKYQTLANQSGYKDKPYALMPRLSVEWRKNTGRAQIGVSAQFTRFSHDSRQDGSRLVVYPDIKWDFSNSWGYVRPKLGLHATYYSLNRFGSQEARRVSRTLPIVNIDSGATFERNTRMFGGEVLQTLEPRLFYNYIPAKSQNDLPNFDSSESSFGYGQLFRENLYYGNDRINTANSLSAAVQSRILDGATGEERFRAGIGQKFYFKDDAVMLDGSVGKKPRNRSDWVAFASGSIGSRFILDSSIHYNQNDKRAENYAVGASYRPAQGKVLNARYKYGRNEKIYLKSDGSYFYDKLSQLDLSAQWPLTRNLSAVVRYNYGFEAKKPIEVLAGAEYKSSCGCWGAGVYAQRYVTGENTYKNAVFFSLQLKDLSSVGRNPADRMDVAVPGYITAHSLSAGRNKRP</sequence>
<dbReference type="EMBL" id="AE002098">
    <property type="protein sequence ID" value="AAF40734.1"/>
    <property type="status" value="ALT_INIT"/>
    <property type="molecule type" value="Genomic_DNA"/>
</dbReference>
<dbReference type="PIR" id="E81217">
    <property type="entry name" value="E81217"/>
</dbReference>
<dbReference type="RefSeq" id="NP_273336.1">
    <property type="nucleotide sequence ID" value="NC_003112.2"/>
</dbReference>
<dbReference type="RefSeq" id="WP_002243965.1">
    <property type="nucleotide sequence ID" value="NC_003112.2"/>
</dbReference>
<dbReference type="SMR" id="Q9K187"/>
<dbReference type="FunCoup" id="Q9K187">
    <property type="interactions" value="120"/>
</dbReference>
<dbReference type="STRING" id="122586.NMB0280"/>
<dbReference type="TCDB" id="1.B.42.1.1">
    <property type="family name" value="the outer membrane lipopolysaccharide export porin (lps-ep) family"/>
</dbReference>
<dbReference type="PaxDb" id="122586-NMB0280"/>
<dbReference type="KEGG" id="nme:NMB0280"/>
<dbReference type="PATRIC" id="fig|122586.8.peg.349"/>
<dbReference type="HOGENOM" id="CLU_009039_0_0_4"/>
<dbReference type="InParanoid" id="Q9K187"/>
<dbReference type="OrthoDB" id="9760225at2"/>
<dbReference type="Proteomes" id="UP000000425">
    <property type="component" value="Chromosome"/>
</dbReference>
<dbReference type="GO" id="GO:0009279">
    <property type="term" value="C:cell outer membrane"/>
    <property type="evidence" value="ECO:0000318"/>
    <property type="project" value="GO_Central"/>
</dbReference>
<dbReference type="GO" id="GO:1990351">
    <property type="term" value="C:transporter complex"/>
    <property type="evidence" value="ECO:0000318"/>
    <property type="project" value="GO_Central"/>
</dbReference>
<dbReference type="GO" id="GO:0043165">
    <property type="term" value="P:Gram-negative-bacterium-type cell outer membrane assembly"/>
    <property type="evidence" value="ECO:0007669"/>
    <property type="project" value="UniProtKB-UniRule"/>
</dbReference>
<dbReference type="GO" id="GO:0015920">
    <property type="term" value="P:lipopolysaccharide transport"/>
    <property type="evidence" value="ECO:0007669"/>
    <property type="project" value="InterPro"/>
</dbReference>
<dbReference type="Gene3D" id="2.60.450.10">
    <property type="entry name" value="Lipopolysaccharide (LPS) transport protein A like domain"/>
    <property type="match status" value="1"/>
</dbReference>
<dbReference type="HAMAP" id="MF_01411">
    <property type="entry name" value="LPS_assembly_LptD"/>
    <property type="match status" value="1"/>
</dbReference>
<dbReference type="InterPro" id="IPR020889">
    <property type="entry name" value="LipoPS_assembly_LptD"/>
</dbReference>
<dbReference type="InterPro" id="IPR050218">
    <property type="entry name" value="LptD"/>
</dbReference>
<dbReference type="InterPro" id="IPR007543">
    <property type="entry name" value="LptD_C"/>
</dbReference>
<dbReference type="PANTHER" id="PTHR30189">
    <property type="entry name" value="LPS-ASSEMBLY PROTEIN"/>
    <property type="match status" value="1"/>
</dbReference>
<dbReference type="PANTHER" id="PTHR30189:SF1">
    <property type="entry name" value="LPS-ASSEMBLY PROTEIN LPTD"/>
    <property type="match status" value="1"/>
</dbReference>
<dbReference type="Pfam" id="PF04453">
    <property type="entry name" value="LptD"/>
    <property type="match status" value="1"/>
</dbReference>
<gene>
    <name evidence="1" type="primary">lptD</name>
    <name type="synonym">imp</name>
    <name type="synonym">ostA</name>
    <name type="ordered locus">NMB0280</name>
</gene>
<feature type="signal peptide" evidence="1">
    <location>
        <begin position="1"/>
        <end position="25"/>
    </location>
</feature>
<feature type="chain" id="PRO_0000281620" description="LPS-assembly protein LptD">
    <location>
        <begin position="26"/>
        <end position="802"/>
    </location>
</feature>
<organism>
    <name type="scientific">Neisseria meningitidis serogroup B (strain ATCC BAA-335 / MC58)</name>
    <dbReference type="NCBI Taxonomy" id="122586"/>
    <lineage>
        <taxon>Bacteria</taxon>
        <taxon>Pseudomonadati</taxon>
        <taxon>Pseudomonadota</taxon>
        <taxon>Betaproteobacteria</taxon>
        <taxon>Neisseriales</taxon>
        <taxon>Neisseriaceae</taxon>
        <taxon>Neisseria</taxon>
    </lineage>
</organism>
<proteinExistence type="evidence at protein level"/>
<protein>
    <recommendedName>
        <fullName evidence="1">LPS-assembly protein LptD</fullName>
    </recommendedName>
</protein>